<sequence length="302" mass="35203">MDQKRLTHLRQLEAESIHIIREVAAEFSNPVMLYSIGKDSSVMLHLARKAFYPGTLPFPLLHVDTGWKFREMYEFRDRTAKAYGCELLVHKNPEGVAMGINPFVHGSAKHTDIMKTEGLKQALNKYGFDAAFGGARRDEEKSRAKERIYSFRDRFHRWDPKNQRPELWHNYNGQINKGESIRVFPLSNWTEQDIWQYIWLENIDIVPLYLAAERPVLERDGMLMMIDDNRIDLQPGEVIKKRMVRFRTLGCWPLTGAVESNAQTLPEIIEEMLVSTTSERQGRVIDRDQAGSMELKKRQGYF</sequence>
<protein>
    <recommendedName>
        <fullName evidence="1">Sulfate adenylyltransferase subunit 2</fullName>
        <ecNumber evidence="1">2.7.7.4</ecNumber>
    </recommendedName>
    <alternativeName>
        <fullName evidence="1">ATP-sulfurylase small subunit</fullName>
    </alternativeName>
    <alternativeName>
        <fullName evidence="1">Sulfate adenylate transferase</fullName>
        <shortName evidence="1">SAT</shortName>
    </alternativeName>
</protein>
<name>CYSD_SHIF8</name>
<gene>
    <name evidence="1" type="primary">cysD</name>
    <name type="ordered locus">SFV_2746</name>
</gene>
<keyword id="KW-0067">ATP-binding</keyword>
<keyword id="KW-0547">Nucleotide-binding</keyword>
<keyword id="KW-0548">Nucleotidyltransferase</keyword>
<keyword id="KW-0808">Transferase</keyword>
<comment type="function">
    <text evidence="1">With CysN forms the ATP sulfurylase (ATPS) that catalyzes the adenylation of sulfate producing adenosine 5'-phosphosulfate (APS) and diphosphate, the first enzymatic step in sulfur assimilation pathway. APS synthesis involves the formation of a high-energy phosphoric-sulfuric acid anhydride bond driven by GTP hydrolysis by CysN coupled to ATP hydrolysis by CysD.</text>
</comment>
<comment type="catalytic activity">
    <reaction evidence="1">
        <text>sulfate + ATP + H(+) = adenosine 5'-phosphosulfate + diphosphate</text>
        <dbReference type="Rhea" id="RHEA:18133"/>
        <dbReference type="ChEBI" id="CHEBI:15378"/>
        <dbReference type="ChEBI" id="CHEBI:16189"/>
        <dbReference type="ChEBI" id="CHEBI:30616"/>
        <dbReference type="ChEBI" id="CHEBI:33019"/>
        <dbReference type="ChEBI" id="CHEBI:58243"/>
        <dbReference type="EC" id="2.7.7.4"/>
    </reaction>
</comment>
<comment type="pathway">
    <text evidence="1">Sulfur metabolism; hydrogen sulfide biosynthesis; sulfite from sulfate: step 1/3.</text>
</comment>
<comment type="subunit">
    <text evidence="1">Heterodimer composed of CysD, the smaller subunit, and CysN.</text>
</comment>
<comment type="similarity">
    <text evidence="1">Belongs to the PAPS reductase family. CysD subfamily.</text>
</comment>
<accession>Q0T1I3</accession>
<reference key="1">
    <citation type="journal article" date="2006" name="BMC Genomics">
        <title>Complete genome sequence of Shigella flexneri 5b and comparison with Shigella flexneri 2a.</title>
        <authorList>
            <person name="Nie H."/>
            <person name="Yang F."/>
            <person name="Zhang X."/>
            <person name="Yang J."/>
            <person name="Chen L."/>
            <person name="Wang J."/>
            <person name="Xiong Z."/>
            <person name="Peng J."/>
            <person name="Sun L."/>
            <person name="Dong J."/>
            <person name="Xue Y."/>
            <person name="Xu X."/>
            <person name="Chen S."/>
            <person name="Yao Z."/>
            <person name="Shen Y."/>
            <person name="Jin Q."/>
        </authorList>
    </citation>
    <scope>NUCLEOTIDE SEQUENCE [LARGE SCALE GENOMIC DNA]</scope>
    <source>
        <strain>8401</strain>
    </source>
</reference>
<feature type="chain" id="PRO_1000008995" description="Sulfate adenylyltransferase subunit 2">
    <location>
        <begin position="1"/>
        <end position="302"/>
    </location>
</feature>
<proteinExistence type="inferred from homology"/>
<dbReference type="EC" id="2.7.7.4" evidence="1"/>
<dbReference type="EMBL" id="CP000266">
    <property type="protein sequence ID" value="ABF04832.1"/>
    <property type="molecule type" value="Genomic_DNA"/>
</dbReference>
<dbReference type="RefSeq" id="WP_000372392.1">
    <property type="nucleotide sequence ID" value="NC_008258.1"/>
</dbReference>
<dbReference type="SMR" id="Q0T1I3"/>
<dbReference type="GeneID" id="89517568"/>
<dbReference type="KEGG" id="sfv:SFV_2746"/>
<dbReference type="HOGENOM" id="CLU_043026_0_0_6"/>
<dbReference type="UniPathway" id="UPA00140">
    <property type="reaction ID" value="UER00204"/>
</dbReference>
<dbReference type="Proteomes" id="UP000000659">
    <property type="component" value="Chromosome"/>
</dbReference>
<dbReference type="GO" id="GO:0005524">
    <property type="term" value="F:ATP binding"/>
    <property type="evidence" value="ECO:0007669"/>
    <property type="project" value="UniProtKB-KW"/>
</dbReference>
<dbReference type="GO" id="GO:0004781">
    <property type="term" value="F:sulfate adenylyltransferase (ATP) activity"/>
    <property type="evidence" value="ECO:0007669"/>
    <property type="project" value="UniProtKB-UniRule"/>
</dbReference>
<dbReference type="GO" id="GO:0070814">
    <property type="term" value="P:hydrogen sulfide biosynthetic process"/>
    <property type="evidence" value="ECO:0007669"/>
    <property type="project" value="UniProtKB-UniRule"/>
</dbReference>
<dbReference type="GO" id="GO:0000103">
    <property type="term" value="P:sulfate assimilation"/>
    <property type="evidence" value="ECO:0007669"/>
    <property type="project" value="UniProtKB-UniRule"/>
</dbReference>
<dbReference type="CDD" id="cd23946">
    <property type="entry name" value="Sulfate_adenylyltransferase_2"/>
    <property type="match status" value="1"/>
</dbReference>
<dbReference type="FunFam" id="3.40.50.620:FF:000002">
    <property type="entry name" value="Sulfate adenylyltransferase subunit 2"/>
    <property type="match status" value="1"/>
</dbReference>
<dbReference type="Gene3D" id="3.40.50.620">
    <property type="entry name" value="HUPs"/>
    <property type="match status" value="1"/>
</dbReference>
<dbReference type="HAMAP" id="MF_00064">
    <property type="entry name" value="Sulf_adenylyltr_sub2"/>
    <property type="match status" value="1"/>
</dbReference>
<dbReference type="InterPro" id="IPR002500">
    <property type="entry name" value="PAPS_reduct_dom"/>
</dbReference>
<dbReference type="InterPro" id="IPR014729">
    <property type="entry name" value="Rossmann-like_a/b/a_fold"/>
</dbReference>
<dbReference type="InterPro" id="IPR011784">
    <property type="entry name" value="SO4_adenylTrfase_ssu"/>
</dbReference>
<dbReference type="InterPro" id="IPR050128">
    <property type="entry name" value="Sulfate_adenylyltrnsfr_sub2"/>
</dbReference>
<dbReference type="NCBIfam" id="TIGR02039">
    <property type="entry name" value="CysD"/>
    <property type="match status" value="1"/>
</dbReference>
<dbReference type="NCBIfam" id="NF003587">
    <property type="entry name" value="PRK05253.1"/>
    <property type="match status" value="1"/>
</dbReference>
<dbReference type="NCBIfam" id="NF009214">
    <property type="entry name" value="PRK12563.1"/>
    <property type="match status" value="1"/>
</dbReference>
<dbReference type="PANTHER" id="PTHR43196">
    <property type="entry name" value="SULFATE ADENYLYLTRANSFERASE SUBUNIT 2"/>
    <property type="match status" value="1"/>
</dbReference>
<dbReference type="PANTHER" id="PTHR43196:SF1">
    <property type="entry name" value="SULFATE ADENYLYLTRANSFERASE SUBUNIT 2"/>
    <property type="match status" value="1"/>
</dbReference>
<dbReference type="Pfam" id="PF01507">
    <property type="entry name" value="PAPS_reduct"/>
    <property type="match status" value="1"/>
</dbReference>
<dbReference type="PIRSF" id="PIRSF002936">
    <property type="entry name" value="CysDAde_trans"/>
    <property type="match status" value="1"/>
</dbReference>
<dbReference type="SUPFAM" id="SSF52402">
    <property type="entry name" value="Adenine nucleotide alpha hydrolases-like"/>
    <property type="match status" value="1"/>
</dbReference>
<evidence type="ECO:0000255" key="1">
    <source>
        <dbReference type="HAMAP-Rule" id="MF_00064"/>
    </source>
</evidence>
<organism>
    <name type="scientific">Shigella flexneri serotype 5b (strain 8401)</name>
    <dbReference type="NCBI Taxonomy" id="373384"/>
    <lineage>
        <taxon>Bacteria</taxon>
        <taxon>Pseudomonadati</taxon>
        <taxon>Pseudomonadota</taxon>
        <taxon>Gammaproteobacteria</taxon>
        <taxon>Enterobacterales</taxon>
        <taxon>Enterobacteriaceae</taxon>
        <taxon>Shigella</taxon>
    </lineage>
</organism>